<name>ADPRM_MOUSE</name>
<protein>
    <recommendedName>
        <fullName>Manganese-dependent ADP-ribose/CDP-alcohol diphosphatase</fullName>
        <ecNumber>3.6.1.13</ecNumber>
        <ecNumber>3.6.1.16</ecNumber>
        <ecNumber>3.6.1.53</ecNumber>
    </recommendedName>
    <alternativeName>
        <fullName>ADPRibase-Mn</fullName>
    </alternativeName>
    <alternativeName>
        <fullName>CDP-choline phosphohydrolase</fullName>
    </alternativeName>
</protein>
<accession>Q99KS6</accession>
<accession>Q5SUD1</accession>
<accession>Q9D7K9</accession>
<comment type="function">
    <text evidence="1">Hydrolyzes ADP-ribose, IDP-ribose, CDP-glycerol, CDP-choline and CDP-ethanolamine, but not other non-reducing ADP-sugars or CDP-glucose. May be involved in immune cell signaling as suggested by the second-messenger role of ADP-ribose, which activates TRPM2 as a mediator of oxidative/nitrosative stress (By similarity).</text>
</comment>
<comment type="catalytic activity">
    <reaction>
        <text>CDP-choline + H2O = phosphocholine + CMP + 2 H(+)</text>
        <dbReference type="Rhea" id="RHEA:32487"/>
        <dbReference type="ChEBI" id="CHEBI:15377"/>
        <dbReference type="ChEBI" id="CHEBI:15378"/>
        <dbReference type="ChEBI" id="CHEBI:58779"/>
        <dbReference type="ChEBI" id="CHEBI:60377"/>
        <dbReference type="ChEBI" id="CHEBI:295975"/>
        <dbReference type="EC" id="3.6.1.53"/>
    </reaction>
</comment>
<comment type="catalytic activity">
    <reaction>
        <text>ADP-D-ribose + H2O = D-ribose 5-phosphate + AMP + 2 H(+)</text>
        <dbReference type="Rhea" id="RHEA:10412"/>
        <dbReference type="ChEBI" id="CHEBI:15377"/>
        <dbReference type="ChEBI" id="CHEBI:15378"/>
        <dbReference type="ChEBI" id="CHEBI:57967"/>
        <dbReference type="ChEBI" id="CHEBI:78346"/>
        <dbReference type="ChEBI" id="CHEBI:456215"/>
        <dbReference type="EC" id="3.6.1.13"/>
    </reaction>
</comment>
<comment type="catalytic activity">
    <reaction>
        <text>ADP-D-ribose + H2O = D-ribose 5-phosphate + AMP + 2 H(+)</text>
        <dbReference type="Rhea" id="RHEA:10412"/>
        <dbReference type="ChEBI" id="CHEBI:15377"/>
        <dbReference type="ChEBI" id="CHEBI:15378"/>
        <dbReference type="ChEBI" id="CHEBI:57967"/>
        <dbReference type="ChEBI" id="CHEBI:78346"/>
        <dbReference type="ChEBI" id="CHEBI:456215"/>
        <dbReference type="EC" id="3.6.1.53"/>
    </reaction>
</comment>
<comment type="catalytic activity">
    <reaction>
        <text>CDP-glycerol + H2O = sn-glycerol 3-phosphate + CMP + 2 H(+)</text>
        <dbReference type="Rhea" id="RHEA:21692"/>
        <dbReference type="ChEBI" id="CHEBI:15377"/>
        <dbReference type="ChEBI" id="CHEBI:15378"/>
        <dbReference type="ChEBI" id="CHEBI:57597"/>
        <dbReference type="ChEBI" id="CHEBI:58311"/>
        <dbReference type="ChEBI" id="CHEBI:60377"/>
        <dbReference type="EC" id="3.6.1.16"/>
    </reaction>
</comment>
<comment type="cofactor">
    <cofactor evidence="1">
        <name>Mg(2+)</name>
        <dbReference type="ChEBI" id="CHEBI:18420"/>
    </cofactor>
</comment>
<comment type="subunit">
    <text evidence="1">Monomer.</text>
</comment>
<comment type="alternative products">
    <event type="alternative splicing"/>
    <isoform>
        <id>Q99KS6-1</id>
        <name>1</name>
        <sequence type="displayed"/>
    </isoform>
    <isoform>
        <id>Q99KS6-2</id>
        <name>2</name>
        <sequence type="described" ref="VSP_025094 VSP_025095"/>
    </isoform>
</comment>
<comment type="similarity">
    <text evidence="4">Belongs to the ADPRibase-Mn family.</text>
</comment>
<dbReference type="EC" id="3.6.1.13"/>
<dbReference type="EC" id="3.6.1.16"/>
<dbReference type="EC" id="3.6.1.53"/>
<dbReference type="EMBL" id="AK009142">
    <property type="protein sequence ID" value="BAB26101.1"/>
    <property type="molecule type" value="mRNA"/>
</dbReference>
<dbReference type="EMBL" id="AK145941">
    <property type="protein sequence ID" value="BAE26771.1"/>
    <property type="molecule type" value="mRNA"/>
</dbReference>
<dbReference type="EMBL" id="AL645988">
    <property type="status" value="NOT_ANNOTATED_CDS"/>
    <property type="molecule type" value="Genomic_DNA"/>
</dbReference>
<dbReference type="EMBL" id="BC004029">
    <property type="protein sequence ID" value="AAH04029.1"/>
    <property type="molecule type" value="mRNA"/>
</dbReference>
<dbReference type="CCDS" id="CCDS48820.1">
    <molecule id="Q99KS6-1"/>
</dbReference>
<dbReference type="RefSeq" id="NP_079786.2">
    <molecule id="Q99KS6-1"/>
    <property type="nucleotide sequence ID" value="NM_025510.3"/>
</dbReference>
<dbReference type="RefSeq" id="XP_006534003.1">
    <molecule id="Q99KS6-1"/>
    <property type="nucleotide sequence ID" value="XM_006533940.4"/>
</dbReference>
<dbReference type="SMR" id="Q99KS6"/>
<dbReference type="FunCoup" id="Q99KS6">
    <property type="interactions" value="282"/>
</dbReference>
<dbReference type="STRING" id="10090.ENSMUSP00000112064"/>
<dbReference type="GlyGen" id="Q99KS6">
    <property type="glycosylation" value="1 site, 1 O-linked glycan (1 site)"/>
</dbReference>
<dbReference type="iPTMnet" id="Q99KS6"/>
<dbReference type="PhosphoSitePlus" id="Q99KS6"/>
<dbReference type="PaxDb" id="10090-ENSMUSP00000112064"/>
<dbReference type="ProteomicsDB" id="285619">
    <molecule id="Q99KS6-1"/>
</dbReference>
<dbReference type="ProteomicsDB" id="285620">
    <molecule id="Q99KS6-2"/>
</dbReference>
<dbReference type="Pumba" id="Q99KS6"/>
<dbReference type="Antibodypedia" id="12941">
    <property type="antibodies" value="66 antibodies from 17 providers"/>
</dbReference>
<dbReference type="DNASU" id="66358"/>
<dbReference type="Ensembl" id="ENSMUST00000116363.2">
    <molecule id="Q99KS6-1"/>
    <property type="protein sequence ID" value="ENSMUSP00000112064.2"/>
    <property type="gene ID" value="ENSMUSG00000020910.17"/>
</dbReference>
<dbReference type="Ensembl" id="ENSMUST00000146338.8">
    <molecule id="Q99KS6-2"/>
    <property type="protein sequence ID" value="ENSMUSP00000137768.2"/>
    <property type="gene ID" value="ENSMUSG00000020910.17"/>
</dbReference>
<dbReference type="GeneID" id="66358"/>
<dbReference type="KEGG" id="mmu:66358"/>
<dbReference type="UCSC" id="uc007jlt.2">
    <molecule id="Q99KS6-1"/>
    <property type="organism name" value="mouse"/>
</dbReference>
<dbReference type="AGR" id="MGI:1913608"/>
<dbReference type="CTD" id="56985"/>
<dbReference type="MGI" id="MGI:1913608">
    <property type="gene designation" value="Adprm"/>
</dbReference>
<dbReference type="VEuPathDB" id="HostDB:ENSMUSG00000020910"/>
<dbReference type="eggNOG" id="ENOG502QUQW">
    <property type="taxonomic scope" value="Eukaryota"/>
</dbReference>
<dbReference type="GeneTree" id="ENSGT00390000014667"/>
<dbReference type="HOGENOM" id="CLU_039893_0_1_1"/>
<dbReference type="InParanoid" id="Q99KS6"/>
<dbReference type="OMA" id="GHNHAGN"/>
<dbReference type="OrthoDB" id="9675250at2759"/>
<dbReference type="PhylomeDB" id="Q99KS6"/>
<dbReference type="TreeFam" id="TF331229"/>
<dbReference type="BRENDA" id="3.6.1.53">
    <property type="organism ID" value="3474"/>
</dbReference>
<dbReference type="Reactome" id="R-MMU-2393930">
    <property type="pathway name" value="Phosphate bond hydrolysis by NUDT proteins"/>
</dbReference>
<dbReference type="BioGRID-ORCS" id="66358">
    <property type="hits" value="5 hits in 78 CRISPR screens"/>
</dbReference>
<dbReference type="PRO" id="PR:Q99KS6"/>
<dbReference type="Proteomes" id="UP000000589">
    <property type="component" value="Chromosome 11"/>
</dbReference>
<dbReference type="RNAct" id="Q99KS6">
    <property type="molecule type" value="protein"/>
</dbReference>
<dbReference type="Bgee" id="ENSMUSG00000020910">
    <property type="expression patterns" value="Expressed in granulocyte and 262 other cell types or tissues"/>
</dbReference>
<dbReference type="GO" id="GO:0047631">
    <property type="term" value="F:ADP-ribose diphosphatase activity"/>
    <property type="evidence" value="ECO:0007669"/>
    <property type="project" value="UniProtKB-EC"/>
</dbReference>
<dbReference type="GO" id="GO:0047734">
    <property type="term" value="F:CDP-glycerol diphosphatase activity"/>
    <property type="evidence" value="ECO:0007669"/>
    <property type="project" value="UniProtKB-EC"/>
</dbReference>
<dbReference type="GO" id="GO:0046872">
    <property type="term" value="F:metal ion binding"/>
    <property type="evidence" value="ECO:0007669"/>
    <property type="project" value="UniProtKB-KW"/>
</dbReference>
<dbReference type="CDD" id="cd07396">
    <property type="entry name" value="MPP_Nbla03831"/>
    <property type="match status" value="1"/>
</dbReference>
<dbReference type="FunFam" id="3.60.21.10:FF:000067">
    <property type="entry name" value="Manganese-dependent ADP-ribose/CDP-alcohol diphosphatase"/>
    <property type="match status" value="1"/>
</dbReference>
<dbReference type="Gene3D" id="3.60.21.10">
    <property type="match status" value="1"/>
</dbReference>
<dbReference type="InterPro" id="IPR004843">
    <property type="entry name" value="Calcineurin-like_PHP_ApaH"/>
</dbReference>
<dbReference type="InterPro" id="IPR029052">
    <property type="entry name" value="Metallo-depent_PP-like"/>
</dbReference>
<dbReference type="InterPro" id="IPR041869">
    <property type="entry name" value="MPP_ADPRM"/>
</dbReference>
<dbReference type="PANTHER" id="PTHR16509">
    <property type="match status" value="1"/>
</dbReference>
<dbReference type="PANTHER" id="PTHR16509:SF1">
    <property type="entry name" value="MANGANESE-DEPENDENT ADP-RIBOSE_CDP-ALCOHOL DIPHOSPHATASE"/>
    <property type="match status" value="1"/>
</dbReference>
<dbReference type="Pfam" id="PF00149">
    <property type="entry name" value="Metallophos"/>
    <property type="match status" value="1"/>
</dbReference>
<dbReference type="SUPFAM" id="SSF56300">
    <property type="entry name" value="Metallo-dependent phosphatases"/>
    <property type="match status" value="1"/>
</dbReference>
<gene>
    <name type="primary">Adprm</name>
</gene>
<keyword id="KW-0007">Acetylation</keyword>
<keyword id="KW-0025">Alternative splicing</keyword>
<keyword id="KW-0378">Hydrolase</keyword>
<keyword id="KW-0479">Metal-binding</keyword>
<keyword id="KW-1185">Reference proteome</keyword>
<keyword id="KW-0862">Zinc</keyword>
<sequence length="340" mass="38948">MADKLVPSSPADASEPLFSFGVIADIQYADLEDGYNYQRSRRRYYRHSLIHLQGAIEDWNKESSMPCCVLQLGDIIDGYNAQYKVSEKSLELVMNTFQMLKVPVHHTWGNHEFYNFSRDYLASSKLNSKFLEDQIAQHPETTPSENYYAYHFVPFPKFRFILLDSYDLSVLGIDPSSPKYEQCMKMLREHNPNVELNSPQGLSEPQYVQFNGGFSQEQLNWLNEVLTFSDTNQEKVVIVSHLPIYPEASDSVCLAWNYVDALSIIWSHKCVVCFLAGHTHDGGYSEDPFGVHHVNLEGVIETAPDSQAFGTVHVFPDKMLLKGRGRVPDRIMNYKREEAL</sequence>
<feature type="chain" id="PRO_0000286568" description="Manganese-dependent ADP-ribose/CDP-alcohol diphosphatase">
    <location>
        <begin position="1"/>
        <end position="340"/>
    </location>
</feature>
<feature type="binding site" evidence="1">
    <location>
        <position position="25"/>
    </location>
    <ligand>
        <name>Zn(2+)</name>
        <dbReference type="ChEBI" id="CHEBI:29105"/>
        <label>1</label>
    </ligand>
</feature>
<feature type="binding site" evidence="1">
    <location>
        <position position="27"/>
    </location>
    <ligand>
        <name>Zn(2+)</name>
        <dbReference type="ChEBI" id="CHEBI:29105"/>
        <label>1</label>
    </ligand>
</feature>
<feature type="binding site" evidence="1">
    <location>
        <position position="74"/>
    </location>
    <ligand>
        <name>Zn(2+)</name>
        <dbReference type="ChEBI" id="CHEBI:29105"/>
        <label>1</label>
    </ligand>
</feature>
<feature type="binding site" evidence="1">
    <location>
        <position position="74"/>
    </location>
    <ligand>
        <name>Zn(2+)</name>
        <dbReference type="ChEBI" id="CHEBI:29105"/>
        <label>2</label>
    </ligand>
</feature>
<feature type="binding site" evidence="1">
    <location>
        <position position="110"/>
    </location>
    <ligand>
        <name>Zn(2+)</name>
        <dbReference type="ChEBI" id="CHEBI:29105"/>
        <label>2</label>
    </ligand>
</feature>
<feature type="binding site" evidence="1">
    <location>
        <position position="241"/>
    </location>
    <ligand>
        <name>Zn(2+)</name>
        <dbReference type="ChEBI" id="CHEBI:29105"/>
        <label>2</label>
    </ligand>
</feature>
<feature type="binding site" evidence="1">
    <location>
        <position position="278"/>
    </location>
    <ligand>
        <name>Zn(2+)</name>
        <dbReference type="ChEBI" id="CHEBI:29105"/>
        <label>2</label>
    </ligand>
</feature>
<feature type="binding site" evidence="1">
    <location>
        <position position="280"/>
    </location>
    <ligand>
        <name>Zn(2+)</name>
        <dbReference type="ChEBI" id="CHEBI:29105"/>
        <label>1</label>
    </ligand>
</feature>
<feature type="modified residue" description="N-acetylmethionine" evidence="2">
    <location>
        <position position="1"/>
    </location>
</feature>
<feature type="splice variant" id="VSP_025094" description="In isoform 2." evidence="3">
    <original>LSEP</original>
    <variation>ELLL</variation>
    <location>
        <begin position="202"/>
        <end position="205"/>
    </location>
</feature>
<feature type="splice variant" id="VSP_025095" description="In isoform 2." evidence="3">
    <location>
        <begin position="206"/>
        <end position="340"/>
    </location>
</feature>
<feature type="sequence conflict" description="In Ref. 1; BAB26101." evidence="4" ref="1">
    <original>W</original>
    <variation>C</variation>
    <location>
        <position position="59"/>
    </location>
</feature>
<reference key="1">
    <citation type="journal article" date="2005" name="Science">
        <title>The transcriptional landscape of the mammalian genome.</title>
        <authorList>
            <person name="Carninci P."/>
            <person name="Kasukawa T."/>
            <person name="Katayama S."/>
            <person name="Gough J."/>
            <person name="Frith M.C."/>
            <person name="Maeda N."/>
            <person name="Oyama R."/>
            <person name="Ravasi T."/>
            <person name="Lenhard B."/>
            <person name="Wells C."/>
            <person name="Kodzius R."/>
            <person name="Shimokawa K."/>
            <person name="Bajic V.B."/>
            <person name="Brenner S.E."/>
            <person name="Batalov S."/>
            <person name="Forrest A.R."/>
            <person name="Zavolan M."/>
            <person name="Davis M.J."/>
            <person name="Wilming L.G."/>
            <person name="Aidinis V."/>
            <person name="Allen J.E."/>
            <person name="Ambesi-Impiombato A."/>
            <person name="Apweiler R."/>
            <person name="Aturaliya R.N."/>
            <person name="Bailey T.L."/>
            <person name="Bansal M."/>
            <person name="Baxter L."/>
            <person name="Beisel K.W."/>
            <person name="Bersano T."/>
            <person name="Bono H."/>
            <person name="Chalk A.M."/>
            <person name="Chiu K.P."/>
            <person name="Choudhary V."/>
            <person name="Christoffels A."/>
            <person name="Clutterbuck D.R."/>
            <person name="Crowe M.L."/>
            <person name="Dalla E."/>
            <person name="Dalrymple B.P."/>
            <person name="de Bono B."/>
            <person name="Della Gatta G."/>
            <person name="di Bernardo D."/>
            <person name="Down T."/>
            <person name="Engstrom P."/>
            <person name="Fagiolini M."/>
            <person name="Faulkner G."/>
            <person name="Fletcher C.F."/>
            <person name="Fukushima T."/>
            <person name="Furuno M."/>
            <person name="Futaki S."/>
            <person name="Gariboldi M."/>
            <person name="Georgii-Hemming P."/>
            <person name="Gingeras T.R."/>
            <person name="Gojobori T."/>
            <person name="Green R.E."/>
            <person name="Gustincich S."/>
            <person name="Harbers M."/>
            <person name="Hayashi Y."/>
            <person name="Hensch T.K."/>
            <person name="Hirokawa N."/>
            <person name="Hill D."/>
            <person name="Huminiecki L."/>
            <person name="Iacono M."/>
            <person name="Ikeo K."/>
            <person name="Iwama A."/>
            <person name="Ishikawa T."/>
            <person name="Jakt M."/>
            <person name="Kanapin A."/>
            <person name="Katoh M."/>
            <person name="Kawasawa Y."/>
            <person name="Kelso J."/>
            <person name="Kitamura H."/>
            <person name="Kitano H."/>
            <person name="Kollias G."/>
            <person name="Krishnan S.P."/>
            <person name="Kruger A."/>
            <person name="Kummerfeld S.K."/>
            <person name="Kurochkin I.V."/>
            <person name="Lareau L.F."/>
            <person name="Lazarevic D."/>
            <person name="Lipovich L."/>
            <person name="Liu J."/>
            <person name="Liuni S."/>
            <person name="McWilliam S."/>
            <person name="Madan Babu M."/>
            <person name="Madera M."/>
            <person name="Marchionni L."/>
            <person name="Matsuda H."/>
            <person name="Matsuzawa S."/>
            <person name="Miki H."/>
            <person name="Mignone F."/>
            <person name="Miyake S."/>
            <person name="Morris K."/>
            <person name="Mottagui-Tabar S."/>
            <person name="Mulder N."/>
            <person name="Nakano N."/>
            <person name="Nakauchi H."/>
            <person name="Ng P."/>
            <person name="Nilsson R."/>
            <person name="Nishiguchi S."/>
            <person name="Nishikawa S."/>
            <person name="Nori F."/>
            <person name="Ohara O."/>
            <person name="Okazaki Y."/>
            <person name="Orlando V."/>
            <person name="Pang K.C."/>
            <person name="Pavan W.J."/>
            <person name="Pavesi G."/>
            <person name="Pesole G."/>
            <person name="Petrovsky N."/>
            <person name="Piazza S."/>
            <person name="Reed J."/>
            <person name="Reid J.F."/>
            <person name="Ring B.Z."/>
            <person name="Ringwald M."/>
            <person name="Rost B."/>
            <person name="Ruan Y."/>
            <person name="Salzberg S.L."/>
            <person name="Sandelin A."/>
            <person name="Schneider C."/>
            <person name="Schoenbach C."/>
            <person name="Sekiguchi K."/>
            <person name="Semple C.A."/>
            <person name="Seno S."/>
            <person name="Sessa L."/>
            <person name="Sheng Y."/>
            <person name="Shibata Y."/>
            <person name="Shimada H."/>
            <person name="Shimada K."/>
            <person name="Silva D."/>
            <person name="Sinclair B."/>
            <person name="Sperling S."/>
            <person name="Stupka E."/>
            <person name="Sugiura K."/>
            <person name="Sultana R."/>
            <person name="Takenaka Y."/>
            <person name="Taki K."/>
            <person name="Tammoja K."/>
            <person name="Tan S.L."/>
            <person name="Tang S."/>
            <person name="Taylor M.S."/>
            <person name="Tegner J."/>
            <person name="Teichmann S.A."/>
            <person name="Ueda H.R."/>
            <person name="van Nimwegen E."/>
            <person name="Verardo R."/>
            <person name="Wei C.L."/>
            <person name="Yagi K."/>
            <person name="Yamanishi H."/>
            <person name="Zabarovsky E."/>
            <person name="Zhu S."/>
            <person name="Zimmer A."/>
            <person name="Hide W."/>
            <person name="Bult C."/>
            <person name="Grimmond S.M."/>
            <person name="Teasdale R.D."/>
            <person name="Liu E.T."/>
            <person name="Brusic V."/>
            <person name="Quackenbush J."/>
            <person name="Wahlestedt C."/>
            <person name="Mattick J.S."/>
            <person name="Hume D.A."/>
            <person name="Kai C."/>
            <person name="Sasaki D."/>
            <person name="Tomaru Y."/>
            <person name="Fukuda S."/>
            <person name="Kanamori-Katayama M."/>
            <person name="Suzuki M."/>
            <person name="Aoki J."/>
            <person name="Arakawa T."/>
            <person name="Iida J."/>
            <person name="Imamura K."/>
            <person name="Itoh M."/>
            <person name="Kato T."/>
            <person name="Kawaji H."/>
            <person name="Kawagashira N."/>
            <person name="Kawashima T."/>
            <person name="Kojima M."/>
            <person name="Kondo S."/>
            <person name="Konno H."/>
            <person name="Nakano K."/>
            <person name="Ninomiya N."/>
            <person name="Nishio T."/>
            <person name="Okada M."/>
            <person name="Plessy C."/>
            <person name="Shibata K."/>
            <person name="Shiraki T."/>
            <person name="Suzuki S."/>
            <person name="Tagami M."/>
            <person name="Waki K."/>
            <person name="Watahiki A."/>
            <person name="Okamura-Oho Y."/>
            <person name="Suzuki H."/>
            <person name="Kawai J."/>
            <person name="Hayashizaki Y."/>
        </authorList>
    </citation>
    <scope>NUCLEOTIDE SEQUENCE [LARGE SCALE MRNA] (ISOFORMS 1 AND 2)</scope>
    <source>
        <strain>C57BL/6J</strain>
        <tissue>Placenta</tissue>
        <tissue>Tongue</tissue>
    </source>
</reference>
<reference key="2">
    <citation type="journal article" date="2009" name="PLoS Biol.">
        <title>Lineage-specific biology revealed by a finished genome assembly of the mouse.</title>
        <authorList>
            <person name="Church D.M."/>
            <person name="Goodstadt L."/>
            <person name="Hillier L.W."/>
            <person name="Zody M.C."/>
            <person name="Goldstein S."/>
            <person name="She X."/>
            <person name="Bult C.J."/>
            <person name="Agarwala R."/>
            <person name="Cherry J.L."/>
            <person name="DiCuccio M."/>
            <person name="Hlavina W."/>
            <person name="Kapustin Y."/>
            <person name="Meric P."/>
            <person name="Maglott D."/>
            <person name="Birtle Z."/>
            <person name="Marques A.C."/>
            <person name="Graves T."/>
            <person name="Zhou S."/>
            <person name="Teague B."/>
            <person name="Potamousis K."/>
            <person name="Churas C."/>
            <person name="Place M."/>
            <person name="Herschleb J."/>
            <person name="Runnheim R."/>
            <person name="Forrest D."/>
            <person name="Amos-Landgraf J."/>
            <person name="Schwartz D.C."/>
            <person name="Cheng Z."/>
            <person name="Lindblad-Toh K."/>
            <person name="Eichler E.E."/>
            <person name="Ponting C.P."/>
        </authorList>
    </citation>
    <scope>NUCLEOTIDE SEQUENCE [LARGE SCALE GENOMIC DNA]</scope>
    <source>
        <strain>C57BL/6J</strain>
    </source>
</reference>
<reference key="3">
    <citation type="journal article" date="2004" name="Genome Res.">
        <title>The status, quality, and expansion of the NIH full-length cDNA project: the Mammalian Gene Collection (MGC).</title>
        <authorList>
            <consortium name="The MGC Project Team"/>
        </authorList>
    </citation>
    <scope>NUCLEOTIDE SEQUENCE [LARGE SCALE MRNA] (ISOFORM 1)</scope>
    <source>
        <strain>Czech II</strain>
        <tissue>Mammary tumor</tissue>
    </source>
</reference>
<reference key="4">
    <citation type="journal article" date="2010" name="Cell">
        <title>A tissue-specific atlas of mouse protein phosphorylation and expression.</title>
        <authorList>
            <person name="Huttlin E.L."/>
            <person name="Jedrychowski M.P."/>
            <person name="Elias J.E."/>
            <person name="Goswami T."/>
            <person name="Rad R."/>
            <person name="Beausoleil S.A."/>
            <person name="Villen J."/>
            <person name="Haas W."/>
            <person name="Sowa M.E."/>
            <person name="Gygi S.P."/>
        </authorList>
    </citation>
    <scope>IDENTIFICATION BY MASS SPECTROMETRY [LARGE SCALE ANALYSIS]</scope>
    <source>
        <tissue>Brain</tissue>
        <tissue>Lung</tissue>
        <tissue>Spleen</tissue>
    </source>
</reference>
<proteinExistence type="evidence at protein level"/>
<organism>
    <name type="scientific">Mus musculus</name>
    <name type="common">Mouse</name>
    <dbReference type="NCBI Taxonomy" id="10090"/>
    <lineage>
        <taxon>Eukaryota</taxon>
        <taxon>Metazoa</taxon>
        <taxon>Chordata</taxon>
        <taxon>Craniata</taxon>
        <taxon>Vertebrata</taxon>
        <taxon>Euteleostomi</taxon>
        <taxon>Mammalia</taxon>
        <taxon>Eutheria</taxon>
        <taxon>Euarchontoglires</taxon>
        <taxon>Glires</taxon>
        <taxon>Rodentia</taxon>
        <taxon>Myomorpha</taxon>
        <taxon>Muroidea</taxon>
        <taxon>Muridae</taxon>
        <taxon>Murinae</taxon>
        <taxon>Mus</taxon>
        <taxon>Mus</taxon>
    </lineage>
</organism>
<evidence type="ECO:0000250" key="1"/>
<evidence type="ECO:0000250" key="2">
    <source>
        <dbReference type="UniProtKB" id="Q3LIE5"/>
    </source>
</evidence>
<evidence type="ECO:0000303" key="3">
    <source>
    </source>
</evidence>
<evidence type="ECO:0000305" key="4"/>